<comment type="function">
    <text evidence="1">Catalyzes the attachment of tyrosine to tRNA(Tyr) in a two-step reaction: tyrosine is first activated by ATP to form Tyr-AMP and then transferred to the acceptor end of tRNA(Tyr).</text>
</comment>
<comment type="catalytic activity">
    <reaction evidence="1">
        <text>tRNA(Tyr) + L-tyrosine + ATP = L-tyrosyl-tRNA(Tyr) + AMP + diphosphate + H(+)</text>
        <dbReference type="Rhea" id="RHEA:10220"/>
        <dbReference type="Rhea" id="RHEA-COMP:9706"/>
        <dbReference type="Rhea" id="RHEA-COMP:9707"/>
        <dbReference type="ChEBI" id="CHEBI:15378"/>
        <dbReference type="ChEBI" id="CHEBI:30616"/>
        <dbReference type="ChEBI" id="CHEBI:33019"/>
        <dbReference type="ChEBI" id="CHEBI:58315"/>
        <dbReference type="ChEBI" id="CHEBI:78442"/>
        <dbReference type="ChEBI" id="CHEBI:78536"/>
        <dbReference type="ChEBI" id="CHEBI:456215"/>
        <dbReference type="EC" id="6.1.1.1"/>
    </reaction>
</comment>
<comment type="subunit">
    <text evidence="1">Homodimer.</text>
</comment>
<comment type="subcellular location">
    <subcellularLocation>
        <location evidence="1">Cytoplasm</location>
    </subcellularLocation>
</comment>
<comment type="similarity">
    <text evidence="1">Belongs to the class-I aminoacyl-tRNA synthetase family. TyrS type 1 subfamily.</text>
</comment>
<comment type="sequence caution" evidence="2">
    <conflict type="erroneous initiation">
        <sequence resource="EMBL-CDS" id="ABC65426"/>
    </conflict>
</comment>
<accession>Q2NJG7</accession>
<gene>
    <name evidence="1" type="primary">tyrS</name>
    <name type="ordered locus">AYWB_309</name>
</gene>
<keyword id="KW-0030">Aminoacyl-tRNA synthetase</keyword>
<keyword id="KW-0067">ATP-binding</keyword>
<keyword id="KW-0963">Cytoplasm</keyword>
<keyword id="KW-0436">Ligase</keyword>
<keyword id="KW-0547">Nucleotide-binding</keyword>
<keyword id="KW-0648">Protein biosynthesis</keyword>
<keyword id="KW-0694">RNA-binding</keyword>
<evidence type="ECO:0000255" key="1">
    <source>
        <dbReference type="HAMAP-Rule" id="MF_02006"/>
    </source>
</evidence>
<evidence type="ECO:0000305" key="2"/>
<feature type="chain" id="PRO_0000234666" description="Tyrosine--tRNA ligase">
    <location>
        <begin position="1"/>
        <end position="413"/>
    </location>
</feature>
<feature type="domain" description="S4 RNA-binding" evidence="1">
    <location>
        <begin position="347"/>
        <end position="413"/>
    </location>
</feature>
<feature type="short sequence motif" description="'HIGH' region">
    <location>
        <begin position="39"/>
        <end position="48"/>
    </location>
</feature>
<feature type="short sequence motif" description="'KMSKS' region">
    <location>
        <begin position="225"/>
        <end position="229"/>
    </location>
</feature>
<feature type="binding site" evidence="1">
    <location>
        <position position="34"/>
    </location>
    <ligand>
        <name>L-tyrosine</name>
        <dbReference type="ChEBI" id="CHEBI:58315"/>
    </ligand>
</feature>
<feature type="binding site" evidence="1">
    <location>
        <position position="164"/>
    </location>
    <ligand>
        <name>L-tyrosine</name>
        <dbReference type="ChEBI" id="CHEBI:58315"/>
    </ligand>
</feature>
<feature type="binding site" evidence="1">
    <location>
        <position position="168"/>
    </location>
    <ligand>
        <name>L-tyrosine</name>
        <dbReference type="ChEBI" id="CHEBI:58315"/>
    </ligand>
</feature>
<feature type="binding site" evidence="1">
    <location>
        <position position="228"/>
    </location>
    <ligand>
        <name>ATP</name>
        <dbReference type="ChEBI" id="CHEBI:30616"/>
    </ligand>
</feature>
<dbReference type="EC" id="6.1.1.1" evidence="1"/>
<dbReference type="EMBL" id="CP000061">
    <property type="protein sequence ID" value="ABC65426.1"/>
    <property type="status" value="ALT_INIT"/>
    <property type="molecule type" value="Genomic_DNA"/>
</dbReference>
<dbReference type="RefSeq" id="WP_041639831.1">
    <property type="nucleotide sequence ID" value="NC_007716.1"/>
</dbReference>
<dbReference type="SMR" id="Q2NJG7"/>
<dbReference type="STRING" id="322098.AYWB_309"/>
<dbReference type="KEGG" id="ayw:AYWB_309"/>
<dbReference type="eggNOG" id="COG0162">
    <property type="taxonomic scope" value="Bacteria"/>
</dbReference>
<dbReference type="HOGENOM" id="CLU_024003_0_2_14"/>
<dbReference type="OrthoDB" id="9804243at2"/>
<dbReference type="PhylomeDB" id="Q2NJG7"/>
<dbReference type="Proteomes" id="UP000001934">
    <property type="component" value="Chromosome"/>
</dbReference>
<dbReference type="GO" id="GO:0005829">
    <property type="term" value="C:cytosol"/>
    <property type="evidence" value="ECO:0007669"/>
    <property type="project" value="TreeGrafter"/>
</dbReference>
<dbReference type="GO" id="GO:0005524">
    <property type="term" value="F:ATP binding"/>
    <property type="evidence" value="ECO:0007669"/>
    <property type="project" value="UniProtKB-UniRule"/>
</dbReference>
<dbReference type="GO" id="GO:0003723">
    <property type="term" value="F:RNA binding"/>
    <property type="evidence" value="ECO:0007669"/>
    <property type="project" value="UniProtKB-KW"/>
</dbReference>
<dbReference type="GO" id="GO:0004831">
    <property type="term" value="F:tyrosine-tRNA ligase activity"/>
    <property type="evidence" value="ECO:0007669"/>
    <property type="project" value="UniProtKB-UniRule"/>
</dbReference>
<dbReference type="GO" id="GO:0006437">
    <property type="term" value="P:tyrosyl-tRNA aminoacylation"/>
    <property type="evidence" value="ECO:0007669"/>
    <property type="project" value="UniProtKB-UniRule"/>
</dbReference>
<dbReference type="CDD" id="cd00805">
    <property type="entry name" value="TyrRS_core"/>
    <property type="match status" value="1"/>
</dbReference>
<dbReference type="FunFam" id="1.10.240.10:FF:000001">
    <property type="entry name" value="Tyrosine--tRNA ligase"/>
    <property type="match status" value="1"/>
</dbReference>
<dbReference type="Gene3D" id="3.40.50.620">
    <property type="entry name" value="HUPs"/>
    <property type="match status" value="1"/>
</dbReference>
<dbReference type="Gene3D" id="3.10.290.10">
    <property type="entry name" value="RNA-binding S4 domain"/>
    <property type="match status" value="1"/>
</dbReference>
<dbReference type="Gene3D" id="1.10.240.10">
    <property type="entry name" value="Tyrosyl-Transfer RNA Synthetase"/>
    <property type="match status" value="1"/>
</dbReference>
<dbReference type="HAMAP" id="MF_02006">
    <property type="entry name" value="Tyr_tRNA_synth_type1"/>
    <property type="match status" value="1"/>
</dbReference>
<dbReference type="InterPro" id="IPR002305">
    <property type="entry name" value="aa-tRNA-synth_Ic"/>
</dbReference>
<dbReference type="InterPro" id="IPR014729">
    <property type="entry name" value="Rossmann-like_a/b/a_fold"/>
</dbReference>
<dbReference type="InterPro" id="IPR036986">
    <property type="entry name" value="S4_RNA-bd_sf"/>
</dbReference>
<dbReference type="InterPro" id="IPR054608">
    <property type="entry name" value="SYY-like_C"/>
</dbReference>
<dbReference type="InterPro" id="IPR002307">
    <property type="entry name" value="Tyr-tRNA-ligase"/>
</dbReference>
<dbReference type="InterPro" id="IPR024088">
    <property type="entry name" value="Tyr-tRNA-ligase_bac-type"/>
</dbReference>
<dbReference type="InterPro" id="IPR024107">
    <property type="entry name" value="Tyr-tRNA-ligase_bac_1"/>
</dbReference>
<dbReference type="NCBIfam" id="TIGR00234">
    <property type="entry name" value="tyrS"/>
    <property type="match status" value="1"/>
</dbReference>
<dbReference type="PANTHER" id="PTHR11766:SF0">
    <property type="entry name" value="TYROSINE--TRNA LIGASE, MITOCHONDRIAL"/>
    <property type="match status" value="1"/>
</dbReference>
<dbReference type="PANTHER" id="PTHR11766">
    <property type="entry name" value="TYROSYL-TRNA SYNTHETASE"/>
    <property type="match status" value="1"/>
</dbReference>
<dbReference type="Pfam" id="PF22421">
    <property type="entry name" value="SYY_C-terminal"/>
    <property type="match status" value="1"/>
</dbReference>
<dbReference type="Pfam" id="PF00579">
    <property type="entry name" value="tRNA-synt_1b"/>
    <property type="match status" value="1"/>
</dbReference>
<dbReference type="PRINTS" id="PR01040">
    <property type="entry name" value="TRNASYNTHTYR"/>
</dbReference>
<dbReference type="SUPFAM" id="SSF55174">
    <property type="entry name" value="Alpha-L RNA-binding motif"/>
    <property type="match status" value="1"/>
</dbReference>
<dbReference type="SUPFAM" id="SSF52374">
    <property type="entry name" value="Nucleotidylyl transferase"/>
    <property type="match status" value="1"/>
</dbReference>
<dbReference type="PROSITE" id="PS50889">
    <property type="entry name" value="S4"/>
    <property type="match status" value="1"/>
</dbReference>
<name>SYY_AYWBP</name>
<organism>
    <name type="scientific">Aster yellows witches'-broom phytoplasma (strain AYWB)</name>
    <dbReference type="NCBI Taxonomy" id="322098"/>
    <lineage>
        <taxon>Bacteria</taxon>
        <taxon>Bacillati</taxon>
        <taxon>Mycoplasmatota</taxon>
        <taxon>Mollicutes</taxon>
        <taxon>Acholeplasmatales</taxon>
        <taxon>Acholeplasmataceae</taxon>
        <taxon>Candidatus Phytoplasma</taxon>
        <taxon>16SrI (Aster yellows group)</taxon>
    </lineage>
</organism>
<proteinExistence type="inferred from homology"/>
<reference key="1">
    <citation type="journal article" date="2006" name="J. Bacteriol.">
        <title>Living with genome instability: the adaptation of phytoplasmas to diverse environments of their insect and plant hosts.</title>
        <authorList>
            <person name="Bai X."/>
            <person name="Zhang J."/>
            <person name="Ewing A."/>
            <person name="Miller S.A."/>
            <person name="Jancso Radek A."/>
            <person name="Shevchenko D.V."/>
            <person name="Tsukerman K."/>
            <person name="Walunas T."/>
            <person name="Lapidus A."/>
            <person name="Campbell J.W."/>
            <person name="Hogenhout S.A."/>
        </authorList>
    </citation>
    <scope>NUCLEOTIDE SEQUENCE [LARGE SCALE GENOMIC DNA]</scope>
    <source>
        <strain>AYWB</strain>
    </source>
</reference>
<sequence>MSFYEELKWRNLIKDCNNEIQVKELLDNNQVKFYCGFDPTSHSLTVGHLIQITMILLMQRQGHLPVILVGGATGLIGDPKETEERKLLSLENSLQNAKSIESQLKTILLNKQVEFVNNYQWLSQIDIISFLRNYGKFFNINYMLSKHVVAKRLASGISFTEFSYMILQSLDFHHLYKNHKVRLQLGGSDQWGNITSGLEIIRKLEKKSDALGVSTPLLLNSDGTKFGKSEKRVLWLNPLMTSPYEIYQYFLNVSDKEVINYLKMLTLIPKKGILELEKKTLENPQKRLAQKALTQSIINLIHSSDILQECIKTNQILFSNAKKESFQEKDFILLQKTLFCHSIKEDILLVDALVQTKLATSKSEAREFIKDNTIKLFNQKIKSLDFIITKENTLFGKYILLKKGKKNNALIVF</sequence>
<protein>
    <recommendedName>
        <fullName evidence="1">Tyrosine--tRNA ligase</fullName>
        <ecNumber evidence="1">6.1.1.1</ecNumber>
    </recommendedName>
    <alternativeName>
        <fullName evidence="1">Tyrosyl-tRNA synthetase</fullName>
        <shortName evidence="1">TyrRS</shortName>
    </alternativeName>
</protein>